<evidence type="ECO:0000255" key="1">
    <source>
        <dbReference type="HAMAP-Rule" id="MF_00693"/>
    </source>
</evidence>
<reference key="1">
    <citation type="submission" date="2007-07" db="EMBL/GenBank/DDBJ databases">
        <title>Complete genome sequence of Campylobacter hominis ATCC BAA-381, a commensal isolated from the human gastrointestinal tract.</title>
        <authorList>
            <person name="Fouts D.E."/>
            <person name="Mongodin E.F."/>
            <person name="Puiu D."/>
            <person name="Sebastian Y."/>
            <person name="Miller W.G."/>
            <person name="Mandrell R.E."/>
            <person name="Nelson K.E."/>
        </authorList>
    </citation>
    <scope>NUCLEOTIDE SEQUENCE [LARGE SCALE GENOMIC DNA]</scope>
    <source>
        <strain>ATCC BAA-381 / DSM 21671 / CCUG 45161 / LMG 19568 / NCTC 13146 / CH001A</strain>
    </source>
</reference>
<keyword id="KW-0963">Cytoplasm</keyword>
<keyword id="KW-0238">DNA-binding</keyword>
<keyword id="KW-1185">Reference proteome</keyword>
<keyword id="KW-0804">Transcription</keyword>
<keyword id="KW-0805">Transcription regulation</keyword>
<proteinExistence type="inferred from homology"/>
<protein>
    <recommendedName>
        <fullName evidence="1">Probable transcriptional regulatory protein CHAB381_1426</fullName>
    </recommendedName>
</protein>
<sequence length="244" mass="27215">MGRAFEYRRASKEARWGKMSKLFPKLGKSITMAAKEGGPDPDMNPKLRTAIATAKAQNMPKDNIDAAIKRASGKDAADIKIIHYDGKAPHGALLIIECASDNSTRTVANIKSILNKGNGEFLPNGSLTFMFSRKSVFEVEYPKRDLEAVELDLIDYGLTEMEENEFENDKGEIEKTLTIYGDYESFGTLNEGIEKLGLTIKSGNLQFVANNFVEFADEDLKEIEELIEKLEDDDDVQAVYTNIK</sequence>
<dbReference type="EMBL" id="CP000776">
    <property type="protein sequence ID" value="ABS52274.1"/>
    <property type="molecule type" value="Genomic_DNA"/>
</dbReference>
<dbReference type="RefSeq" id="WP_012109271.1">
    <property type="nucleotide sequence ID" value="NC_009714.1"/>
</dbReference>
<dbReference type="SMR" id="A7I377"/>
<dbReference type="STRING" id="360107.CHAB381_1426"/>
<dbReference type="KEGG" id="cha:CHAB381_1426"/>
<dbReference type="eggNOG" id="COG0217">
    <property type="taxonomic scope" value="Bacteria"/>
</dbReference>
<dbReference type="HOGENOM" id="CLU_062974_2_2_7"/>
<dbReference type="OrthoDB" id="9781053at2"/>
<dbReference type="Proteomes" id="UP000002407">
    <property type="component" value="Chromosome"/>
</dbReference>
<dbReference type="GO" id="GO:0005829">
    <property type="term" value="C:cytosol"/>
    <property type="evidence" value="ECO:0007669"/>
    <property type="project" value="TreeGrafter"/>
</dbReference>
<dbReference type="GO" id="GO:0003677">
    <property type="term" value="F:DNA binding"/>
    <property type="evidence" value="ECO:0007669"/>
    <property type="project" value="UniProtKB-UniRule"/>
</dbReference>
<dbReference type="GO" id="GO:0006355">
    <property type="term" value="P:regulation of DNA-templated transcription"/>
    <property type="evidence" value="ECO:0007669"/>
    <property type="project" value="UniProtKB-UniRule"/>
</dbReference>
<dbReference type="FunFam" id="1.10.10.200:FF:000004">
    <property type="entry name" value="Probable transcriptional regulatory protein BSBG_02618"/>
    <property type="match status" value="1"/>
</dbReference>
<dbReference type="Gene3D" id="1.10.10.200">
    <property type="match status" value="1"/>
</dbReference>
<dbReference type="Gene3D" id="3.30.70.980">
    <property type="match status" value="2"/>
</dbReference>
<dbReference type="HAMAP" id="MF_00693">
    <property type="entry name" value="Transcrip_reg_TACO1"/>
    <property type="match status" value="1"/>
</dbReference>
<dbReference type="InterPro" id="IPR017856">
    <property type="entry name" value="Integrase-like_N"/>
</dbReference>
<dbReference type="InterPro" id="IPR048300">
    <property type="entry name" value="TACO1_YebC-like_2nd/3rd_dom"/>
</dbReference>
<dbReference type="InterPro" id="IPR049083">
    <property type="entry name" value="TACO1_YebC_N"/>
</dbReference>
<dbReference type="InterPro" id="IPR002876">
    <property type="entry name" value="Transcrip_reg_TACO1-like"/>
</dbReference>
<dbReference type="InterPro" id="IPR026564">
    <property type="entry name" value="Transcrip_reg_TACO1-like_dom3"/>
</dbReference>
<dbReference type="InterPro" id="IPR029072">
    <property type="entry name" value="YebC-like"/>
</dbReference>
<dbReference type="NCBIfam" id="NF009044">
    <property type="entry name" value="PRK12378.1"/>
    <property type="match status" value="1"/>
</dbReference>
<dbReference type="NCBIfam" id="TIGR01033">
    <property type="entry name" value="YebC/PmpR family DNA-binding transcriptional regulator"/>
    <property type="match status" value="1"/>
</dbReference>
<dbReference type="PANTHER" id="PTHR12532:SF6">
    <property type="entry name" value="TRANSCRIPTIONAL REGULATORY PROTEIN YEBC-RELATED"/>
    <property type="match status" value="1"/>
</dbReference>
<dbReference type="PANTHER" id="PTHR12532">
    <property type="entry name" value="TRANSLATIONAL ACTIVATOR OF CYTOCHROME C OXIDASE 1"/>
    <property type="match status" value="1"/>
</dbReference>
<dbReference type="Pfam" id="PF20772">
    <property type="entry name" value="TACO1_YebC_N"/>
    <property type="match status" value="1"/>
</dbReference>
<dbReference type="Pfam" id="PF01709">
    <property type="entry name" value="Transcrip_reg"/>
    <property type="match status" value="1"/>
</dbReference>
<dbReference type="SUPFAM" id="SSF75625">
    <property type="entry name" value="YebC-like"/>
    <property type="match status" value="1"/>
</dbReference>
<accession>A7I377</accession>
<feature type="chain" id="PRO_1000045292" description="Probable transcriptional regulatory protein CHAB381_1426">
    <location>
        <begin position="1"/>
        <end position="244"/>
    </location>
</feature>
<organism>
    <name type="scientific">Campylobacter hominis (strain ATCC BAA-381 / DSM 21671 / CCUG 45161 / LMG 19568 / NCTC 13146 / CH001A)</name>
    <dbReference type="NCBI Taxonomy" id="360107"/>
    <lineage>
        <taxon>Bacteria</taxon>
        <taxon>Pseudomonadati</taxon>
        <taxon>Campylobacterota</taxon>
        <taxon>Epsilonproteobacteria</taxon>
        <taxon>Campylobacterales</taxon>
        <taxon>Campylobacteraceae</taxon>
        <taxon>Campylobacter</taxon>
    </lineage>
</organism>
<gene>
    <name type="ordered locus">CHAB381_1426</name>
</gene>
<comment type="subcellular location">
    <subcellularLocation>
        <location evidence="1">Cytoplasm</location>
    </subcellularLocation>
</comment>
<comment type="similarity">
    <text evidence="1">Belongs to the TACO1 family.</text>
</comment>
<name>Y1426_CAMHC</name>